<reference key="1">
    <citation type="journal article" date="2006" name="J. Bacteriol.">
        <title>Comparison of the genome sequence of the poultry pathogen Bordetella avium with those of B. bronchiseptica, B. pertussis, and B. parapertussis reveals extensive diversity in surface structures associated with host interaction.</title>
        <authorList>
            <person name="Sebaihia M."/>
            <person name="Preston A."/>
            <person name="Maskell D.J."/>
            <person name="Kuzmiak H."/>
            <person name="Connell T.D."/>
            <person name="King N.D."/>
            <person name="Orndorff P.E."/>
            <person name="Miyamoto D.M."/>
            <person name="Thomson N.R."/>
            <person name="Harris D."/>
            <person name="Goble A."/>
            <person name="Lord A."/>
            <person name="Murphy L."/>
            <person name="Quail M.A."/>
            <person name="Rutter S."/>
            <person name="Squares R."/>
            <person name="Squares S."/>
            <person name="Woodward J."/>
            <person name="Parkhill J."/>
            <person name="Temple L.M."/>
        </authorList>
    </citation>
    <scope>NUCLEOTIDE SEQUENCE [LARGE SCALE GENOMIC DNA]</scope>
    <source>
        <strain>197N</strain>
    </source>
</reference>
<accession>Q2KUK5</accession>
<evidence type="ECO:0000255" key="1">
    <source>
        <dbReference type="HAMAP-Rule" id="MF_01815"/>
    </source>
</evidence>
<dbReference type="EC" id="2.3.1.180" evidence="1"/>
<dbReference type="EMBL" id="AM167904">
    <property type="protein sequence ID" value="CAJ48728.1"/>
    <property type="molecule type" value="Genomic_DNA"/>
</dbReference>
<dbReference type="RefSeq" id="WP_012416803.1">
    <property type="nucleotide sequence ID" value="NC_010645.1"/>
</dbReference>
<dbReference type="SMR" id="Q2KUK5"/>
<dbReference type="STRING" id="360910.BAV1119"/>
<dbReference type="KEGG" id="bav:BAV1119"/>
<dbReference type="eggNOG" id="COG0332">
    <property type="taxonomic scope" value="Bacteria"/>
</dbReference>
<dbReference type="HOGENOM" id="CLU_039592_3_1_4"/>
<dbReference type="OrthoDB" id="9815506at2"/>
<dbReference type="UniPathway" id="UPA00094"/>
<dbReference type="Proteomes" id="UP000001977">
    <property type="component" value="Chromosome"/>
</dbReference>
<dbReference type="GO" id="GO:0005737">
    <property type="term" value="C:cytoplasm"/>
    <property type="evidence" value="ECO:0007669"/>
    <property type="project" value="UniProtKB-SubCell"/>
</dbReference>
<dbReference type="GO" id="GO:0004315">
    <property type="term" value="F:3-oxoacyl-[acyl-carrier-protein] synthase activity"/>
    <property type="evidence" value="ECO:0007669"/>
    <property type="project" value="InterPro"/>
</dbReference>
<dbReference type="GO" id="GO:0033818">
    <property type="term" value="F:beta-ketoacyl-acyl-carrier-protein synthase III activity"/>
    <property type="evidence" value="ECO:0007669"/>
    <property type="project" value="UniProtKB-UniRule"/>
</dbReference>
<dbReference type="GO" id="GO:0006633">
    <property type="term" value="P:fatty acid biosynthetic process"/>
    <property type="evidence" value="ECO:0007669"/>
    <property type="project" value="UniProtKB-UniRule"/>
</dbReference>
<dbReference type="GO" id="GO:0044550">
    <property type="term" value="P:secondary metabolite biosynthetic process"/>
    <property type="evidence" value="ECO:0007669"/>
    <property type="project" value="TreeGrafter"/>
</dbReference>
<dbReference type="CDD" id="cd00830">
    <property type="entry name" value="KAS_III"/>
    <property type="match status" value="1"/>
</dbReference>
<dbReference type="FunFam" id="3.40.47.10:FF:000004">
    <property type="entry name" value="3-oxoacyl-[acyl-carrier-protein] synthase 3"/>
    <property type="match status" value="1"/>
</dbReference>
<dbReference type="Gene3D" id="3.40.47.10">
    <property type="match status" value="1"/>
</dbReference>
<dbReference type="HAMAP" id="MF_01815">
    <property type="entry name" value="FabH"/>
    <property type="match status" value="1"/>
</dbReference>
<dbReference type="InterPro" id="IPR013747">
    <property type="entry name" value="ACP_syn_III_C"/>
</dbReference>
<dbReference type="InterPro" id="IPR013751">
    <property type="entry name" value="ACP_syn_III_N"/>
</dbReference>
<dbReference type="InterPro" id="IPR004655">
    <property type="entry name" value="FabH"/>
</dbReference>
<dbReference type="InterPro" id="IPR016039">
    <property type="entry name" value="Thiolase-like"/>
</dbReference>
<dbReference type="NCBIfam" id="TIGR00747">
    <property type="entry name" value="fabH"/>
    <property type="match status" value="1"/>
</dbReference>
<dbReference type="NCBIfam" id="NF006829">
    <property type="entry name" value="PRK09352.1"/>
    <property type="match status" value="1"/>
</dbReference>
<dbReference type="PANTHER" id="PTHR34069">
    <property type="entry name" value="3-OXOACYL-[ACYL-CARRIER-PROTEIN] SYNTHASE 3"/>
    <property type="match status" value="1"/>
</dbReference>
<dbReference type="PANTHER" id="PTHR34069:SF2">
    <property type="entry name" value="BETA-KETOACYL-[ACYL-CARRIER-PROTEIN] SYNTHASE III"/>
    <property type="match status" value="1"/>
</dbReference>
<dbReference type="Pfam" id="PF08545">
    <property type="entry name" value="ACP_syn_III"/>
    <property type="match status" value="1"/>
</dbReference>
<dbReference type="Pfam" id="PF08541">
    <property type="entry name" value="ACP_syn_III_C"/>
    <property type="match status" value="1"/>
</dbReference>
<dbReference type="SUPFAM" id="SSF53901">
    <property type="entry name" value="Thiolase-like"/>
    <property type="match status" value="1"/>
</dbReference>
<organism>
    <name type="scientific">Bordetella avium (strain 197N)</name>
    <dbReference type="NCBI Taxonomy" id="360910"/>
    <lineage>
        <taxon>Bacteria</taxon>
        <taxon>Pseudomonadati</taxon>
        <taxon>Pseudomonadota</taxon>
        <taxon>Betaproteobacteria</taxon>
        <taxon>Burkholderiales</taxon>
        <taxon>Alcaligenaceae</taxon>
        <taxon>Bordetella</taxon>
    </lineage>
</organism>
<feature type="chain" id="PRO_1000056329" description="Beta-ketoacyl-[acyl-carrier-protein] synthase III">
    <location>
        <begin position="1"/>
        <end position="328"/>
    </location>
</feature>
<feature type="region of interest" description="ACP-binding" evidence="1">
    <location>
        <begin position="256"/>
        <end position="260"/>
    </location>
</feature>
<feature type="active site" evidence="1">
    <location>
        <position position="122"/>
    </location>
</feature>
<feature type="active site" evidence="1">
    <location>
        <position position="255"/>
    </location>
</feature>
<feature type="active site" evidence="1">
    <location>
        <position position="285"/>
    </location>
</feature>
<gene>
    <name evidence="1" type="primary">fabH</name>
    <name type="ordered locus">BAV1119</name>
</gene>
<sequence length="328" mass="34471">MSMAIKYSVIAGSGSYLPERVVSNDELAVELAQRGIQTSDEWIVERTGIRQRHLAERGVTTSVLATEAARRAMADAGVGPADLDLIIVATSTPDFVFPSTACLVQANLGAKGGAAFDVQAVCSGFAYALTTADSFVRAGRVRCALVIGAEVFSSILDWNDRSTCVLFGDGAGAVVIKAADEPGILAAQLHADGSQTKILCAAGNVAYGQVTGDPFLRMDGQAVFKQAVTVLDRSARDVCAEAGMTIDQVDWLVPHQANVRILNFLARKLNVSADRVVVTVDQHANTSAASVPLALDAARRDGRIKPGQHVLMQGVGGGFTWGSVLARM</sequence>
<comment type="function">
    <text evidence="1">Catalyzes the condensation reaction of fatty acid synthesis by the addition to an acyl acceptor of two carbons from malonyl-ACP. Catalyzes the first condensation reaction which initiates fatty acid synthesis and may therefore play a role in governing the total rate of fatty acid production. Possesses both acetoacetyl-ACP synthase and acetyl transacylase activities. Its substrate specificity determines the biosynthesis of branched-chain and/or straight-chain of fatty acids.</text>
</comment>
<comment type="catalytic activity">
    <reaction evidence="1">
        <text>malonyl-[ACP] + acetyl-CoA + H(+) = 3-oxobutanoyl-[ACP] + CO2 + CoA</text>
        <dbReference type="Rhea" id="RHEA:12080"/>
        <dbReference type="Rhea" id="RHEA-COMP:9623"/>
        <dbReference type="Rhea" id="RHEA-COMP:9625"/>
        <dbReference type="ChEBI" id="CHEBI:15378"/>
        <dbReference type="ChEBI" id="CHEBI:16526"/>
        <dbReference type="ChEBI" id="CHEBI:57287"/>
        <dbReference type="ChEBI" id="CHEBI:57288"/>
        <dbReference type="ChEBI" id="CHEBI:78449"/>
        <dbReference type="ChEBI" id="CHEBI:78450"/>
        <dbReference type="EC" id="2.3.1.180"/>
    </reaction>
</comment>
<comment type="pathway">
    <text evidence="1">Lipid metabolism; fatty acid biosynthesis.</text>
</comment>
<comment type="subunit">
    <text evidence="1">Homodimer.</text>
</comment>
<comment type="subcellular location">
    <subcellularLocation>
        <location evidence="1">Cytoplasm</location>
    </subcellularLocation>
</comment>
<comment type="domain">
    <text evidence="1">The last Arg residue of the ACP-binding site is essential for the weak association between ACP/AcpP and FabH.</text>
</comment>
<comment type="similarity">
    <text evidence="1">Belongs to the thiolase-like superfamily. FabH family.</text>
</comment>
<keyword id="KW-0012">Acyltransferase</keyword>
<keyword id="KW-0963">Cytoplasm</keyword>
<keyword id="KW-0275">Fatty acid biosynthesis</keyword>
<keyword id="KW-0276">Fatty acid metabolism</keyword>
<keyword id="KW-0444">Lipid biosynthesis</keyword>
<keyword id="KW-0443">Lipid metabolism</keyword>
<keyword id="KW-0511">Multifunctional enzyme</keyword>
<keyword id="KW-1185">Reference proteome</keyword>
<keyword id="KW-0808">Transferase</keyword>
<name>FABH_BORA1</name>
<proteinExistence type="inferred from homology"/>
<protein>
    <recommendedName>
        <fullName evidence="1">Beta-ketoacyl-[acyl-carrier-protein] synthase III</fullName>
        <shortName evidence="1">Beta-ketoacyl-ACP synthase III</shortName>
        <shortName evidence="1">KAS III</shortName>
        <ecNumber evidence="1">2.3.1.180</ecNumber>
    </recommendedName>
    <alternativeName>
        <fullName evidence="1">3-oxoacyl-[acyl-carrier-protein] synthase 3</fullName>
    </alternativeName>
    <alternativeName>
        <fullName evidence="1">3-oxoacyl-[acyl-carrier-protein] synthase III</fullName>
    </alternativeName>
</protein>